<sequence>MRTAILKKVKRIVIKIGSRVLTGDENGLNHAFIARLAAETASLRQQGRQVIVVSSGAVAAGRRELGIEGRPKSIPQKQAAAAIGQSRLMRAYEEDFGRFGHKVAQILLTRDDLANRRRFLNARATLDTLLDFGVIPVINENDTVVVDEIKFGDNDNLSALVTNLAEAHLLVILTDIDGFYDSDPRANPDARLIHLVKSITRETERAAGDSGSSVGTGGMVTKLAAAKKAGQFGVPTLMLNGTVPGILTKAFAGREVGTLFLPARESLNRRKHWIAHTLRPSGRVIVDDGARTVLSRQGKSLLPSGVIRVEGEFDRGACVRVCGADGAEIARGVVDYSHAEIERILGHRSGEIEAILGYKYGDEIIHRDNLVVL</sequence>
<comment type="function">
    <text evidence="1">Catalyzes the transfer of a phosphate group to glutamate to form L-glutamate 5-phosphate.</text>
</comment>
<comment type="catalytic activity">
    <reaction evidence="1">
        <text>L-glutamate + ATP = L-glutamyl 5-phosphate + ADP</text>
        <dbReference type="Rhea" id="RHEA:14877"/>
        <dbReference type="ChEBI" id="CHEBI:29985"/>
        <dbReference type="ChEBI" id="CHEBI:30616"/>
        <dbReference type="ChEBI" id="CHEBI:58274"/>
        <dbReference type="ChEBI" id="CHEBI:456216"/>
        <dbReference type="EC" id="2.7.2.11"/>
    </reaction>
</comment>
<comment type="pathway">
    <text evidence="1">Amino-acid biosynthesis; L-proline biosynthesis; L-glutamate 5-semialdehyde from L-glutamate: step 1/2.</text>
</comment>
<comment type="subcellular location">
    <subcellularLocation>
        <location evidence="1">Cytoplasm</location>
    </subcellularLocation>
</comment>
<comment type="similarity">
    <text evidence="1">Belongs to the glutamate 5-kinase family.</text>
</comment>
<reference key="1">
    <citation type="journal article" date="2009" name="BMC Microbiol.">
        <title>The genome sequence of Geobacter metallireducens: features of metabolism, physiology and regulation common and dissimilar to Geobacter sulfurreducens.</title>
        <authorList>
            <person name="Aklujkar M."/>
            <person name="Krushkal J."/>
            <person name="DiBartolo G."/>
            <person name="Lapidus A."/>
            <person name="Land M.L."/>
            <person name="Lovley D.R."/>
        </authorList>
    </citation>
    <scope>NUCLEOTIDE SEQUENCE [LARGE SCALE GENOMIC DNA]</scope>
    <source>
        <strain>ATCC 53774 / DSM 7210 / GS-15</strain>
    </source>
</reference>
<gene>
    <name evidence="1" type="primary">proB</name>
    <name type="ordered locus">Gmet_3198</name>
</gene>
<organism>
    <name type="scientific">Geobacter metallireducens (strain ATCC 53774 / DSM 7210 / GS-15)</name>
    <dbReference type="NCBI Taxonomy" id="269799"/>
    <lineage>
        <taxon>Bacteria</taxon>
        <taxon>Pseudomonadati</taxon>
        <taxon>Thermodesulfobacteriota</taxon>
        <taxon>Desulfuromonadia</taxon>
        <taxon>Geobacterales</taxon>
        <taxon>Geobacteraceae</taxon>
        <taxon>Geobacter</taxon>
    </lineage>
</organism>
<evidence type="ECO:0000255" key="1">
    <source>
        <dbReference type="HAMAP-Rule" id="MF_00456"/>
    </source>
</evidence>
<keyword id="KW-0028">Amino-acid biosynthesis</keyword>
<keyword id="KW-0067">ATP-binding</keyword>
<keyword id="KW-0963">Cytoplasm</keyword>
<keyword id="KW-0418">Kinase</keyword>
<keyword id="KW-0547">Nucleotide-binding</keyword>
<keyword id="KW-0641">Proline biosynthesis</keyword>
<keyword id="KW-1185">Reference proteome</keyword>
<keyword id="KW-0808">Transferase</keyword>
<protein>
    <recommendedName>
        <fullName evidence="1">Glutamate 5-kinase</fullName>
        <ecNumber evidence="1">2.7.2.11</ecNumber>
    </recommendedName>
    <alternativeName>
        <fullName evidence="1">Gamma-glutamyl kinase</fullName>
        <shortName evidence="1">GK</shortName>
    </alternativeName>
</protein>
<name>PROB_GEOMG</name>
<accession>Q39QR3</accession>
<proteinExistence type="inferred from homology"/>
<feature type="chain" id="PRO_0000230046" description="Glutamate 5-kinase">
    <location>
        <begin position="1"/>
        <end position="373"/>
    </location>
</feature>
<feature type="domain" description="PUA" evidence="1">
    <location>
        <begin position="281"/>
        <end position="359"/>
    </location>
</feature>
<feature type="binding site" evidence="1">
    <location>
        <position position="15"/>
    </location>
    <ligand>
        <name>ATP</name>
        <dbReference type="ChEBI" id="CHEBI:30616"/>
    </ligand>
</feature>
<feature type="binding site" evidence="1">
    <location>
        <position position="55"/>
    </location>
    <ligand>
        <name>substrate</name>
    </ligand>
</feature>
<feature type="binding site" evidence="1">
    <location>
        <position position="142"/>
    </location>
    <ligand>
        <name>substrate</name>
    </ligand>
</feature>
<feature type="binding site" evidence="1">
    <location>
        <position position="154"/>
    </location>
    <ligand>
        <name>substrate</name>
    </ligand>
</feature>
<feature type="binding site" evidence="1">
    <location>
        <begin position="174"/>
        <end position="175"/>
    </location>
    <ligand>
        <name>ATP</name>
        <dbReference type="ChEBI" id="CHEBI:30616"/>
    </ligand>
</feature>
<feature type="binding site" evidence="1">
    <location>
        <begin position="216"/>
        <end position="222"/>
    </location>
    <ligand>
        <name>ATP</name>
        <dbReference type="ChEBI" id="CHEBI:30616"/>
    </ligand>
</feature>
<dbReference type="EC" id="2.7.2.11" evidence="1"/>
<dbReference type="EMBL" id="CP000148">
    <property type="protein sequence ID" value="ABB33411.1"/>
    <property type="molecule type" value="Genomic_DNA"/>
</dbReference>
<dbReference type="RefSeq" id="WP_004512636.1">
    <property type="nucleotide sequence ID" value="NC_007517.1"/>
</dbReference>
<dbReference type="SMR" id="Q39QR3"/>
<dbReference type="STRING" id="269799.Gmet_3198"/>
<dbReference type="KEGG" id="gme:Gmet_3198"/>
<dbReference type="eggNOG" id="COG0263">
    <property type="taxonomic scope" value="Bacteria"/>
</dbReference>
<dbReference type="HOGENOM" id="CLU_025400_2_0_7"/>
<dbReference type="UniPathway" id="UPA00098">
    <property type="reaction ID" value="UER00359"/>
</dbReference>
<dbReference type="Proteomes" id="UP000007073">
    <property type="component" value="Chromosome"/>
</dbReference>
<dbReference type="GO" id="GO:0005829">
    <property type="term" value="C:cytosol"/>
    <property type="evidence" value="ECO:0007669"/>
    <property type="project" value="TreeGrafter"/>
</dbReference>
<dbReference type="GO" id="GO:0005524">
    <property type="term" value="F:ATP binding"/>
    <property type="evidence" value="ECO:0007669"/>
    <property type="project" value="UniProtKB-KW"/>
</dbReference>
<dbReference type="GO" id="GO:0004349">
    <property type="term" value="F:glutamate 5-kinase activity"/>
    <property type="evidence" value="ECO:0007669"/>
    <property type="project" value="UniProtKB-UniRule"/>
</dbReference>
<dbReference type="GO" id="GO:0003723">
    <property type="term" value="F:RNA binding"/>
    <property type="evidence" value="ECO:0007669"/>
    <property type="project" value="InterPro"/>
</dbReference>
<dbReference type="GO" id="GO:0055129">
    <property type="term" value="P:L-proline biosynthetic process"/>
    <property type="evidence" value="ECO:0007669"/>
    <property type="project" value="UniProtKB-UniRule"/>
</dbReference>
<dbReference type="CDD" id="cd04242">
    <property type="entry name" value="AAK_G5K_ProB"/>
    <property type="match status" value="1"/>
</dbReference>
<dbReference type="CDD" id="cd21157">
    <property type="entry name" value="PUA_G5K"/>
    <property type="match status" value="1"/>
</dbReference>
<dbReference type="FunFam" id="2.30.130.10:FF:000007">
    <property type="entry name" value="Glutamate 5-kinase"/>
    <property type="match status" value="1"/>
</dbReference>
<dbReference type="FunFam" id="3.40.1160.10:FF:000018">
    <property type="entry name" value="Glutamate 5-kinase"/>
    <property type="match status" value="1"/>
</dbReference>
<dbReference type="Gene3D" id="3.40.1160.10">
    <property type="entry name" value="Acetylglutamate kinase-like"/>
    <property type="match status" value="1"/>
</dbReference>
<dbReference type="Gene3D" id="2.30.130.10">
    <property type="entry name" value="PUA domain"/>
    <property type="match status" value="1"/>
</dbReference>
<dbReference type="HAMAP" id="MF_00456">
    <property type="entry name" value="ProB"/>
    <property type="match status" value="1"/>
</dbReference>
<dbReference type="InterPro" id="IPR036393">
    <property type="entry name" value="AceGlu_kinase-like_sf"/>
</dbReference>
<dbReference type="InterPro" id="IPR001048">
    <property type="entry name" value="Asp/Glu/Uridylate_kinase"/>
</dbReference>
<dbReference type="InterPro" id="IPR041739">
    <property type="entry name" value="G5K_ProB"/>
</dbReference>
<dbReference type="InterPro" id="IPR001057">
    <property type="entry name" value="Glu/AcGlu_kinase"/>
</dbReference>
<dbReference type="InterPro" id="IPR011529">
    <property type="entry name" value="Glu_5kinase"/>
</dbReference>
<dbReference type="InterPro" id="IPR005715">
    <property type="entry name" value="Glu_5kinase/COase_Synthase"/>
</dbReference>
<dbReference type="InterPro" id="IPR019797">
    <property type="entry name" value="Glutamate_5-kinase_CS"/>
</dbReference>
<dbReference type="InterPro" id="IPR002478">
    <property type="entry name" value="PUA"/>
</dbReference>
<dbReference type="InterPro" id="IPR015947">
    <property type="entry name" value="PUA-like_sf"/>
</dbReference>
<dbReference type="InterPro" id="IPR036974">
    <property type="entry name" value="PUA_sf"/>
</dbReference>
<dbReference type="NCBIfam" id="TIGR01027">
    <property type="entry name" value="proB"/>
    <property type="match status" value="1"/>
</dbReference>
<dbReference type="PANTHER" id="PTHR43654">
    <property type="entry name" value="GLUTAMATE 5-KINASE"/>
    <property type="match status" value="1"/>
</dbReference>
<dbReference type="PANTHER" id="PTHR43654:SF1">
    <property type="entry name" value="ISOPENTENYL PHOSPHATE KINASE"/>
    <property type="match status" value="1"/>
</dbReference>
<dbReference type="Pfam" id="PF00696">
    <property type="entry name" value="AA_kinase"/>
    <property type="match status" value="1"/>
</dbReference>
<dbReference type="Pfam" id="PF01472">
    <property type="entry name" value="PUA"/>
    <property type="match status" value="1"/>
</dbReference>
<dbReference type="PIRSF" id="PIRSF000729">
    <property type="entry name" value="GK"/>
    <property type="match status" value="1"/>
</dbReference>
<dbReference type="PRINTS" id="PR00474">
    <property type="entry name" value="GLU5KINASE"/>
</dbReference>
<dbReference type="SMART" id="SM00359">
    <property type="entry name" value="PUA"/>
    <property type="match status" value="1"/>
</dbReference>
<dbReference type="SUPFAM" id="SSF53633">
    <property type="entry name" value="Carbamate kinase-like"/>
    <property type="match status" value="1"/>
</dbReference>
<dbReference type="SUPFAM" id="SSF88697">
    <property type="entry name" value="PUA domain-like"/>
    <property type="match status" value="1"/>
</dbReference>
<dbReference type="PROSITE" id="PS00902">
    <property type="entry name" value="GLUTAMATE_5_KINASE"/>
    <property type="match status" value="1"/>
</dbReference>
<dbReference type="PROSITE" id="PS50890">
    <property type="entry name" value="PUA"/>
    <property type="match status" value="1"/>
</dbReference>